<name>FLIW_BDEBA</name>
<feature type="chain" id="PRO_0000272971" description="Flagellar assembly factor FliW">
    <location>
        <begin position="1"/>
        <end position="175"/>
    </location>
</feature>
<gene>
    <name evidence="1" type="primary">fliW</name>
    <name type="ordered locus">Bd0543</name>
</gene>
<keyword id="KW-1005">Bacterial flagellum biogenesis</keyword>
<keyword id="KW-0143">Chaperone</keyword>
<keyword id="KW-0963">Cytoplasm</keyword>
<keyword id="KW-1185">Reference proteome</keyword>
<keyword id="KW-0810">Translation regulation</keyword>
<reference key="1">
    <citation type="journal article" date="2004" name="Science">
        <title>A predator unmasked: life cycle of Bdellovibrio bacteriovorus from a genomic perspective.</title>
        <authorList>
            <person name="Rendulic S."/>
            <person name="Jagtap P."/>
            <person name="Rosinus A."/>
            <person name="Eppinger M."/>
            <person name="Baar C."/>
            <person name="Lanz C."/>
            <person name="Keller H."/>
            <person name="Lambert C."/>
            <person name="Evans K.J."/>
            <person name="Goesmann A."/>
            <person name="Meyer F."/>
            <person name="Sockett R.E."/>
            <person name="Schuster S.C."/>
        </authorList>
    </citation>
    <scope>NUCLEOTIDE SEQUENCE [LARGE SCALE GENOMIC DNA]</scope>
    <source>
        <strain>ATCC 15356 / DSM 50701 / NCIMB 9529 / HD100</strain>
    </source>
</reference>
<comment type="function">
    <text evidence="1">Acts as an anti-CsrA protein, binds CsrA and prevents it from repressing translation of its target genes, one of which is flagellin. Binds to flagellin and participates in the assembly of the flagellum.</text>
</comment>
<comment type="subunit">
    <text evidence="1">Interacts with translational regulator CsrA and flagellin(s).</text>
</comment>
<comment type="subcellular location">
    <subcellularLocation>
        <location evidence="1">Cytoplasm</location>
    </subcellularLocation>
</comment>
<comment type="similarity">
    <text evidence="1">Belongs to the FliW family.</text>
</comment>
<proteinExistence type="inferred from homology"/>
<dbReference type="EMBL" id="BX842647">
    <property type="protein sequence ID" value="CAE78516.1"/>
    <property type="molecule type" value="Genomic_DNA"/>
</dbReference>
<dbReference type="RefSeq" id="WP_011163118.1">
    <property type="nucleotide sequence ID" value="NC_005363.1"/>
</dbReference>
<dbReference type="SMR" id="Q6MQD1"/>
<dbReference type="STRING" id="264462.Bd0543"/>
<dbReference type="GeneID" id="93011645"/>
<dbReference type="KEGG" id="bba:Bd0543"/>
<dbReference type="eggNOG" id="COG1699">
    <property type="taxonomic scope" value="Bacteria"/>
</dbReference>
<dbReference type="HOGENOM" id="CLU_112356_0_0_7"/>
<dbReference type="Proteomes" id="UP000008080">
    <property type="component" value="Chromosome"/>
</dbReference>
<dbReference type="GO" id="GO:0005737">
    <property type="term" value="C:cytoplasm"/>
    <property type="evidence" value="ECO:0007669"/>
    <property type="project" value="UniProtKB-SubCell"/>
</dbReference>
<dbReference type="GO" id="GO:0044780">
    <property type="term" value="P:bacterial-type flagellum assembly"/>
    <property type="evidence" value="ECO:0007669"/>
    <property type="project" value="UniProtKB-UniRule"/>
</dbReference>
<dbReference type="GO" id="GO:0006417">
    <property type="term" value="P:regulation of translation"/>
    <property type="evidence" value="ECO:0007669"/>
    <property type="project" value="UniProtKB-KW"/>
</dbReference>
<dbReference type="Gene3D" id="2.30.290.10">
    <property type="entry name" value="BH3618-like"/>
    <property type="match status" value="1"/>
</dbReference>
<dbReference type="HAMAP" id="MF_01185">
    <property type="entry name" value="FliW"/>
    <property type="match status" value="1"/>
</dbReference>
<dbReference type="InterPro" id="IPR003775">
    <property type="entry name" value="Flagellar_assembly_factor_FliW"/>
</dbReference>
<dbReference type="InterPro" id="IPR024046">
    <property type="entry name" value="Flagellar_assmbl_FliW_dom_sf"/>
</dbReference>
<dbReference type="PANTHER" id="PTHR39190">
    <property type="entry name" value="FLAGELLAR ASSEMBLY FACTOR FLIW"/>
    <property type="match status" value="1"/>
</dbReference>
<dbReference type="PANTHER" id="PTHR39190:SF1">
    <property type="entry name" value="FLAGELLAR ASSEMBLY FACTOR FLIW"/>
    <property type="match status" value="1"/>
</dbReference>
<dbReference type="Pfam" id="PF02623">
    <property type="entry name" value="FliW"/>
    <property type="match status" value="1"/>
</dbReference>
<dbReference type="SUPFAM" id="SSF141457">
    <property type="entry name" value="BH3618-like"/>
    <property type="match status" value="1"/>
</dbReference>
<protein>
    <recommendedName>
        <fullName evidence="1">Flagellar assembly factor FliW</fullName>
    </recommendedName>
</protein>
<accession>Q6MQD1</accession>
<evidence type="ECO:0000255" key="1">
    <source>
        <dbReference type="HAMAP-Rule" id="MF_01185"/>
    </source>
</evidence>
<sequence length="175" mass="19485">MIISTSRFGQVELKQEDVLTFTEGLLGFADLRKFVLLDDPNDEIFAWLQSCEAPAIAFPVLEPELFAPQYKATLTKGDMEALKLTAQDKARYFSIVTIPDDPTLMTANLKAPVVVNIEARTARQCVLQDNNLAIREPIFTKLQQRVVQNPAVAIKNQSTGIDVATKLHVVRDAEL</sequence>
<organism>
    <name type="scientific">Bdellovibrio bacteriovorus (strain ATCC 15356 / DSM 50701 / NCIMB 9529 / HD100)</name>
    <dbReference type="NCBI Taxonomy" id="264462"/>
    <lineage>
        <taxon>Bacteria</taxon>
        <taxon>Pseudomonadati</taxon>
        <taxon>Bdellovibrionota</taxon>
        <taxon>Bdellovibrionia</taxon>
        <taxon>Bdellovibrionales</taxon>
        <taxon>Pseudobdellovibrionaceae</taxon>
        <taxon>Bdellovibrio</taxon>
    </lineage>
</organism>